<reference key="1">
    <citation type="journal article" date="2006" name="J. Bacteriol.">
        <title>Complete genome sequence of Yersinia pestis strains Antiqua and Nepal516: evidence of gene reduction in an emerging pathogen.</title>
        <authorList>
            <person name="Chain P.S.G."/>
            <person name="Hu P."/>
            <person name="Malfatti S.A."/>
            <person name="Radnedge L."/>
            <person name="Larimer F."/>
            <person name="Vergez L.M."/>
            <person name="Worsham P."/>
            <person name="Chu M.C."/>
            <person name="Andersen G.L."/>
        </authorList>
    </citation>
    <scope>NUCLEOTIDE SEQUENCE [LARGE SCALE GENOMIC DNA]</scope>
    <source>
        <strain>Nepal516</strain>
    </source>
</reference>
<reference key="2">
    <citation type="submission" date="2009-04" db="EMBL/GenBank/DDBJ databases">
        <title>Yersinia pestis Nepal516A whole genome shotgun sequencing project.</title>
        <authorList>
            <person name="Plunkett G. III"/>
            <person name="Anderson B.D."/>
            <person name="Baumler D.J."/>
            <person name="Burland V."/>
            <person name="Cabot E.L."/>
            <person name="Glasner J.D."/>
            <person name="Mau B."/>
            <person name="Neeno-Eckwall E."/>
            <person name="Perna N.T."/>
            <person name="Munk A.C."/>
            <person name="Tapia R."/>
            <person name="Green L.D."/>
            <person name="Rogers Y.C."/>
            <person name="Detter J.C."/>
            <person name="Bruce D.C."/>
            <person name="Brettin T.S."/>
        </authorList>
    </citation>
    <scope>NUCLEOTIDE SEQUENCE [LARGE SCALE GENOMIC DNA]</scope>
    <source>
        <strain>Nepal516</strain>
    </source>
</reference>
<proteinExistence type="inferred from homology"/>
<protein>
    <recommendedName>
        <fullName evidence="1">ATP-dependent protease subunit HslV</fullName>
        <ecNumber evidence="1">3.4.25.2</ecNumber>
    </recommendedName>
</protein>
<feature type="chain" id="PRO_1000012691" description="ATP-dependent protease subunit HslV">
    <location>
        <begin position="1"/>
        <end position="174"/>
    </location>
</feature>
<feature type="active site" evidence="1">
    <location>
        <position position="2"/>
    </location>
</feature>
<feature type="binding site" evidence="1">
    <location>
        <position position="157"/>
    </location>
    <ligand>
        <name>Na(+)</name>
        <dbReference type="ChEBI" id="CHEBI:29101"/>
    </ligand>
</feature>
<feature type="binding site" evidence="1">
    <location>
        <position position="160"/>
    </location>
    <ligand>
        <name>Na(+)</name>
        <dbReference type="ChEBI" id="CHEBI:29101"/>
    </ligand>
</feature>
<feature type="binding site" evidence="1">
    <location>
        <position position="163"/>
    </location>
    <ligand>
        <name>Na(+)</name>
        <dbReference type="ChEBI" id="CHEBI:29101"/>
    </ligand>
</feature>
<name>HSLV_YERPN</name>
<dbReference type="EC" id="3.4.25.2" evidence="1"/>
<dbReference type="EMBL" id="CP000305">
    <property type="protein sequence ID" value="ABG20074.1"/>
    <property type="molecule type" value="Genomic_DNA"/>
</dbReference>
<dbReference type="EMBL" id="ACNQ01000019">
    <property type="protein sequence ID" value="EEO74656.1"/>
    <property type="molecule type" value="Genomic_DNA"/>
</dbReference>
<dbReference type="RefSeq" id="WP_002208942.1">
    <property type="nucleotide sequence ID" value="NZ_ACNQ01000019.1"/>
</dbReference>
<dbReference type="SMR" id="Q1CD56"/>
<dbReference type="MEROPS" id="T01.006"/>
<dbReference type="GeneID" id="97458253"/>
<dbReference type="KEGG" id="ypn:YPN_3747"/>
<dbReference type="HOGENOM" id="CLU_093872_1_0_6"/>
<dbReference type="Proteomes" id="UP000008936">
    <property type="component" value="Chromosome"/>
</dbReference>
<dbReference type="GO" id="GO:0009376">
    <property type="term" value="C:HslUV protease complex"/>
    <property type="evidence" value="ECO:0007669"/>
    <property type="project" value="UniProtKB-UniRule"/>
</dbReference>
<dbReference type="GO" id="GO:0005839">
    <property type="term" value="C:proteasome core complex"/>
    <property type="evidence" value="ECO:0007669"/>
    <property type="project" value="InterPro"/>
</dbReference>
<dbReference type="GO" id="GO:0046872">
    <property type="term" value="F:metal ion binding"/>
    <property type="evidence" value="ECO:0007669"/>
    <property type="project" value="UniProtKB-KW"/>
</dbReference>
<dbReference type="GO" id="GO:0004298">
    <property type="term" value="F:threonine-type endopeptidase activity"/>
    <property type="evidence" value="ECO:0007669"/>
    <property type="project" value="UniProtKB-KW"/>
</dbReference>
<dbReference type="GO" id="GO:0051603">
    <property type="term" value="P:proteolysis involved in protein catabolic process"/>
    <property type="evidence" value="ECO:0007669"/>
    <property type="project" value="InterPro"/>
</dbReference>
<dbReference type="CDD" id="cd01913">
    <property type="entry name" value="protease_HslV"/>
    <property type="match status" value="1"/>
</dbReference>
<dbReference type="FunFam" id="3.60.20.10:FF:000002">
    <property type="entry name" value="ATP-dependent protease subunit HslV"/>
    <property type="match status" value="1"/>
</dbReference>
<dbReference type="Gene3D" id="3.60.20.10">
    <property type="entry name" value="Glutamine Phosphoribosylpyrophosphate, subunit 1, domain 1"/>
    <property type="match status" value="1"/>
</dbReference>
<dbReference type="HAMAP" id="MF_00248">
    <property type="entry name" value="HslV"/>
    <property type="match status" value="1"/>
</dbReference>
<dbReference type="InterPro" id="IPR022281">
    <property type="entry name" value="ATP-dep_Prtase_HsIV_su"/>
</dbReference>
<dbReference type="InterPro" id="IPR029055">
    <property type="entry name" value="Ntn_hydrolases_N"/>
</dbReference>
<dbReference type="InterPro" id="IPR001353">
    <property type="entry name" value="Proteasome_sua/b"/>
</dbReference>
<dbReference type="InterPro" id="IPR023333">
    <property type="entry name" value="Proteasome_suB-type"/>
</dbReference>
<dbReference type="NCBIfam" id="TIGR03692">
    <property type="entry name" value="ATP_dep_HslV"/>
    <property type="match status" value="1"/>
</dbReference>
<dbReference type="NCBIfam" id="NF003964">
    <property type="entry name" value="PRK05456.1"/>
    <property type="match status" value="1"/>
</dbReference>
<dbReference type="PANTHER" id="PTHR32194:SF0">
    <property type="entry name" value="ATP-DEPENDENT PROTEASE SUBUNIT HSLV"/>
    <property type="match status" value="1"/>
</dbReference>
<dbReference type="PANTHER" id="PTHR32194">
    <property type="entry name" value="METALLOPROTEASE TLDD"/>
    <property type="match status" value="1"/>
</dbReference>
<dbReference type="Pfam" id="PF00227">
    <property type="entry name" value="Proteasome"/>
    <property type="match status" value="1"/>
</dbReference>
<dbReference type="PIRSF" id="PIRSF039093">
    <property type="entry name" value="HslV"/>
    <property type="match status" value="1"/>
</dbReference>
<dbReference type="SUPFAM" id="SSF56235">
    <property type="entry name" value="N-terminal nucleophile aminohydrolases (Ntn hydrolases)"/>
    <property type="match status" value="1"/>
</dbReference>
<dbReference type="PROSITE" id="PS51476">
    <property type="entry name" value="PROTEASOME_BETA_2"/>
    <property type="match status" value="1"/>
</dbReference>
<accession>Q1CD56</accession>
<accession>D1Q2A3</accession>
<gene>
    <name evidence="1" type="primary">hslV</name>
    <name type="ordered locus">YPN_3747</name>
    <name type="ORF">YP516_4262</name>
</gene>
<evidence type="ECO:0000255" key="1">
    <source>
        <dbReference type="HAMAP-Rule" id="MF_00248"/>
    </source>
</evidence>
<organism>
    <name type="scientific">Yersinia pestis bv. Antiqua (strain Nepal516)</name>
    <dbReference type="NCBI Taxonomy" id="377628"/>
    <lineage>
        <taxon>Bacteria</taxon>
        <taxon>Pseudomonadati</taxon>
        <taxon>Pseudomonadota</taxon>
        <taxon>Gammaproteobacteria</taxon>
        <taxon>Enterobacterales</taxon>
        <taxon>Yersiniaceae</taxon>
        <taxon>Yersinia</taxon>
    </lineage>
</organism>
<sequence length="174" mass="18895">MTTIVSVRRDGHVVIGGDGQVTLGNTVMKGNAKKVRRLYNNKVIAGFAGGTADAFTLFELFERKLEMHQGHLTKAAVELAKDWRTDRMLRKLEALLAVADETASLIITGNGDVVQPEDDLIAIGSGGPYAQSAARALLENTELGARDIVEKSLSIAGDICIYTNRFQTIEELTY</sequence>
<comment type="function">
    <text evidence="1">Protease subunit of a proteasome-like degradation complex believed to be a general protein degrading machinery.</text>
</comment>
<comment type="catalytic activity">
    <reaction evidence="1">
        <text>ATP-dependent cleavage of peptide bonds with broad specificity.</text>
        <dbReference type="EC" id="3.4.25.2"/>
    </reaction>
</comment>
<comment type="activity regulation">
    <text evidence="1">Allosterically activated by HslU binding.</text>
</comment>
<comment type="subunit">
    <text evidence="1">A double ring-shaped homohexamer of HslV is capped on each side by a ring-shaped HslU homohexamer. The assembly of the HslU/HslV complex is dependent on binding of ATP.</text>
</comment>
<comment type="subcellular location">
    <subcellularLocation>
        <location evidence="1">Cytoplasm</location>
    </subcellularLocation>
</comment>
<comment type="similarity">
    <text evidence="1">Belongs to the peptidase T1B family. HslV subfamily.</text>
</comment>
<keyword id="KW-0021">Allosteric enzyme</keyword>
<keyword id="KW-0963">Cytoplasm</keyword>
<keyword id="KW-0378">Hydrolase</keyword>
<keyword id="KW-0479">Metal-binding</keyword>
<keyword id="KW-0645">Protease</keyword>
<keyword id="KW-0915">Sodium</keyword>
<keyword id="KW-0346">Stress response</keyword>
<keyword id="KW-0888">Threonine protease</keyword>